<organism>
    <name type="scientific">Solibacter usitatus (strain Ellin6076)</name>
    <dbReference type="NCBI Taxonomy" id="234267"/>
    <lineage>
        <taxon>Bacteria</taxon>
        <taxon>Pseudomonadati</taxon>
        <taxon>Acidobacteriota</taxon>
        <taxon>Terriglobia</taxon>
        <taxon>Bryobacterales</taxon>
        <taxon>Solibacteraceae</taxon>
        <taxon>Candidatus Solibacter</taxon>
    </lineage>
</organism>
<accession>Q01QR6</accession>
<feature type="chain" id="PRO_1000014867" description="Large ribosomal subunit protein bL9">
    <location>
        <begin position="1"/>
        <end position="148"/>
    </location>
</feature>
<name>RL9_SOLUE</name>
<reference key="1">
    <citation type="journal article" date="2009" name="Appl. Environ. Microbiol.">
        <title>Three genomes from the phylum Acidobacteria provide insight into the lifestyles of these microorganisms in soils.</title>
        <authorList>
            <person name="Ward N.L."/>
            <person name="Challacombe J.F."/>
            <person name="Janssen P.H."/>
            <person name="Henrissat B."/>
            <person name="Coutinho P.M."/>
            <person name="Wu M."/>
            <person name="Xie G."/>
            <person name="Haft D.H."/>
            <person name="Sait M."/>
            <person name="Badger J."/>
            <person name="Barabote R.D."/>
            <person name="Bradley B."/>
            <person name="Brettin T.S."/>
            <person name="Brinkac L.M."/>
            <person name="Bruce D."/>
            <person name="Creasy T."/>
            <person name="Daugherty S.C."/>
            <person name="Davidsen T.M."/>
            <person name="DeBoy R.T."/>
            <person name="Detter J.C."/>
            <person name="Dodson R.J."/>
            <person name="Durkin A.S."/>
            <person name="Ganapathy A."/>
            <person name="Gwinn-Giglio M."/>
            <person name="Han C.S."/>
            <person name="Khouri H."/>
            <person name="Kiss H."/>
            <person name="Kothari S.P."/>
            <person name="Madupu R."/>
            <person name="Nelson K.E."/>
            <person name="Nelson W.C."/>
            <person name="Paulsen I."/>
            <person name="Penn K."/>
            <person name="Ren Q."/>
            <person name="Rosovitz M.J."/>
            <person name="Selengut J.D."/>
            <person name="Shrivastava S."/>
            <person name="Sullivan S.A."/>
            <person name="Tapia R."/>
            <person name="Thompson L.S."/>
            <person name="Watkins K.L."/>
            <person name="Yang Q."/>
            <person name="Yu C."/>
            <person name="Zafar N."/>
            <person name="Zhou L."/>
            <person name="Kuske C.R."/>
        </authorList>
    </citation>
    <scope>NUCLEOTIDE SEQUENCE [LARGE SCALE GENOMIC DNA]</scope>
    <source>
        <strain>Ellin6076</strain>
    </source>
</reference>
<protein>
    <recommendedName>
        <fullName evidence="1">Large ribosomal subunit protein bL9</fullName>
    </recommendedName>
    <alternativeName>
        <fullName evidence="2">50S ribosomal protein L9</fullName>
    </alternativeName>
</protein>
<sequence>MEVILREDIENLGTRGQLVKVAPGYARNFLLPKRMAVAATEANRKIVEQERQAHLRKETKIKGEAEELAKIMTGVTVRISQKAGENDQLFGSVTSKDIADALTAQNYNIDRRKIQLDEPIKTLGEFKIPVRLYKDVVAEITVIVAKEE</sequence>
<proteinExistence type="inferred from homology"/>
<gene>
    <name evidence="1" type="primary">rplI</name>
    <name type="ordered locus">Acid_7091</name>
</gene>
<dbReference type="EMBL" id="CP000473">
    <property type="protein sequence ID" value="ABJ88004.1"/>
    <property type="molecule type" value="Genomic_DNA"/>
</dbReference>
<dbReference type="SMR" id="Q01QR6"/>
<dbReference type="FunCoup" id="Q01QR6">
    <property type="interactions" value="774"/>
</dbReference>
<dbReference type="STRING" id="234267.Acid_7091"/>
<dbReference type="KEGG" id="sus:Acid_7091"/>
<dbReference type="eggNOG" id="COG0359">
    <property type="taxonomic scope" value="Bacteria"/>
</dbReference>
<dbReference type="HOGENOM" id="CLU_078938_3_0_0"/>
<dbReference type="InParanoid" id="Q01QR6"/>
<dbReference type="OrthoDB" id="9788336at2"/>
<dbReference type="GO" id="GO:1990904">
    <property type="term" value="C:ribonucleoprotein complex"/>
    <property type="evidence" value="ECO:0007669"/>
    <property type="project" value="UniProtKB-KW"/>
</dbReference>
<dbReference type="GO" id="GO:0005840">
    <property type="term" value="C:ribosome"/>
    <property type="evidence" value="ECO:0007669"/>
    <property type="project" value="UniProtKB-KW"/>
</dbReference>
<dbReference type="GO" id="GO:0019843">
    <property type="term" value="F:rRNA binding"/>
    <property type="evidence" value="ECO:0007669"/>
    <property type="project" value="UniProtKB-UniRule"/>
</dbReference>
<dbReference type="GO" id="GO:0003735">
    <property type="term" value="F:structural constituent of ribosome"/>
    <property type="evidence" value="ECO:0007669"/>
    <property type="project" value="InterPro"/>
</dbReference>
<dbReference type="GO" id="GO:0006412">
    <property type="term" value="P:translation"/>
    <property type="evidence" value="ECO:0007669"/>
    <property type="project" value="UniProtKB-UniRule"/>
</dbReference>
<dbReference type="FunFam" id="3.40.5.10:FF:000003">
    <property type="entry name" value="50S ribosomal protein L9"/>
    <property type="match status" value="1"/>
</dbReference>
<dbReference type="Gene3D" id="3.10.430.100">
    <property type="entry name" value="Ribosomal protein L9, C-terminal domain"/>
    <property type="match status" value="1"/>
</dbReference>
<dbReference type="Gene3D" id="3.40.5.10">
    <property type="entry name" value="Ribosomal protein L9, N-terminal domain"/>
    <property type="match status" value="1"/>
</dbReference>
<dbReference type="HAMAP" id="MF_00503">
    <property type="entry name" value="Ribosomal_bL9"/>
    <property type="match status" value="1"/>
</dbReference>
<dbReference type="InterPro" id="IPR000244">
    <property type="entry name" value="Ribosomal_bL9"/>
</dbReference>
<dbReference type="InterPro" id="IPR009027">
    <property type="entry name" value="Ribosomal_bL9/RNase_H1_N"/>
</dbReference>
<dbReference type="InterPro" id="IPR020594">
    <property type="entry name" value="Ribosomal_bL9_bac/chp"/>
</dbReference>
<dbReference type="InterPro" id="IPR020069">
    <property type="entry name" value="Ribosomal_bL9_C"/>
</dbReference>
<dbReference type="InterPro" id="IPR036791">
    <property type="entry name" value="Ribosomal_bL9_C_sf"/>
</dbReference>
<dbReference type="InterPro" id="IPR020070">
    <property type="entry name" value="Ribosomal_bL9_N"/>
</dbReference>
<dbReference type="InterPro" id="IPR036935">
    <property type="entry name" value="Ribosomal_bL9_N_sf"/>
</dbReference>
<dbReference type="NCBIfam" id="TIGR00158">
    <property type="entry name" value="L9"/>
    <property type="match status" value="1"/>
</dbReference>
<dbReference type="PANTHER" id="PTHR21368">
    <property type="entry name" value="50S RIBOSOMAL PROTEIN L9"/>
    <property type="match status" value="1"/>
</dbReference>
<dbReference type="Pfam" id="PF03948">
    <property type="entry name" value="Ribosomal_L9_C"/>
    <property type="match status" value="1"/>
</dbReference>
<dbReference type="Pfam" id="PF01281">
    <property type="entry name" value="Ribosomal_L9_N"/>
    <property type="match status" value="1"/>
</dbReference>
<dbReference type="SUPFAM" id="SSF55658">
    <property type="entry name" value="L9 N-domain-like"/>
    <property type="match status" value="1"/>
</dbReference>
<dbReference type="SUPFAM" id="SSF55653">
    <property type="entry name" value="Ribosomal protein L9 C-domain"/>
    <property type="match status" value="1"/>
</dbReference>
<dbReference type="PROSITE" id="PS00651">
    <property type="entry name" value="RIBOSOMAL_L9"/>
    <property type="match status" value="1"/>
</dbReference>
<keyword id="KW-0687">Ribonucleoprotein</keyword>
<keyword id="KW-0689">Ribosomal protein</keyword>
<keyword id="KW-0694">RNA-binding</keyword>
<keyword id="KW-0699">rRNA-binding</keyword>
<evidence type="ECO:0000255" key="1">
    <source>
        <dbReference type="HAMAP-Rule" id="MF_00503"/>
    </source>
</evidence>
<evidence type="ECO:0000305" key="2"/>
<comment type="function">
    <text evidence="1">Binds to the 23S rRNA.</text>
</comment>
<comment type="similarity">
    <text evidence="1">Belongs to the bacterial ribosomal protein bL9 family.</text>
</comment>